<proteinExistence type="inferred from homology"/>
<feature type="chain" id="PRO_1000196579" description="5'-nucleotidase SurE">
    <location>
        <begin position="1"/>
        <end position="257"/>
    </location>
</feature>
<feature type="binding site" evidence="1">
    <location>
        <position position="8"/>
    </location>
    <ligand>
        <name>a divalent metal cation</name>
        <dbReference type="ChEBI" id="CHEBI:60240"/>
    </ligand>
</feature>
<feature type="binding site" evidence="1">
    <location>
        <position position="9"/>
    </location>
    <ligand>
        <name>a divalent metal cation</name>
        <dbReference type="ChEBI" id="CHEBI:60240"/>
    </ligand>
</feature>
<feature type="binding site" evidence="1">
    <location>
        <position position="40"/>
    </location>
    <ligand>
        <name>a divalent metal cation</name>
        <dbReference type="ChEBI" id="CHEBI:60240"/>
    </ligand>
</feature>
<feature type="binding site" evidence="1">
    <location>
        <position position="92"/>
    </location>
    <ligand>
        <name>a divalent metal cation</name>
        <dbReference type="ChEBI" id="CHEBI:60240"/>
    </ligand>
</feature>
<reference key="1">
    <citation type="journal article" date="2009" name="J. Bacteriol.">
        <title>Genome sequences of three Agrobacterium biovars help elucidate the evolution of multichromosome genomes in bacteria.</title>
        <authorList>
            <person name="Slater S.C."/>
            <person name="Goldman B.S."/>
            <person name="Goodner B."/>
            <person name="Setubal J.C."/>
            <person name="Farrand S.K."/>
            <person name="Nester E.W."/>
            <person name="Burr T.J."/>
            <person name="Banta L."/>
            <person name="Dickerman A.W."/>
            <person name="Paulsen I."/>
            <person name="Otten L."/>
            <person name="Suen G."/>
            <person name="Welch R."/>
            <person name="Almeida N.F."/>
            <person name="Arnold F."/>
            <person name="Burton O.T."/>
            <person name="Du Z."/>
            <person name="Ewing A."/>
            <person name="Godsy E."/>
            <person name="Heisel S."/>
            <person name="Houmiel K.L."/>
            <person name="Jhaveri J."/>
            <person name="Lu J."/>
            <person name="Miller N.M."/>
            <person name="Norton S."/>
            <person name="Chen Q."/>
            <person name="Phoolcharoen W."/>
            <person name="Ohlin V."/>
            <person name="Ondrusek D."/>
            <person name="Pride N."/>
            <person name="Stricklin S.L."/>
            <person name="Sun J."/>
            <person name="Wheeler C."/>
            <person name="Wilson L."/>
            <person name="Zhu H."/>
            <person name="Wood D.W."/>
        </authorList>
    </citation>
    <scope>NUCLEOTIDE SEQUENCE [LARGE SCALE GENOMIC DNA]</scope>
    <source>
        <strain>K84 / ATCC BAA-868</strain>
    </source>
</reference>
<name>SURE_RHIR8</name>
<evidence type="ECO:0000255" key="1">
    <source>
        <dbReference type="HAMAP-Rule" id="MF_00060"/>
    </source>
</evidence>
<dbReference type="EC" id="3.1.3.5" evidence="1"/>
<dbReference type="EMBL" id="CP000628">
    <property type="protein sequence ID" value="ACM26393.1"/>
    <property type="molecule type" value="Genomic_DNA"/>
</dbReference>
<dbReference type="RefSeq" id="WP_012651312.1">
    <property type="nucleotide sequence ID" value="NC_011985.1"/>
</dbReference>
<dbReference type="SMR" id="B9JEH2"/>
<dbReference type="STRING" id="311403.Arad_2132"/>
<dbReference type="KEGG" id="ara:Arad_2132"/>
<dbReference type="eggNOG" id="COG0496">
    <property type="taxonomic scope" value="Bacteria"/>
</dbReference>
<dbReference type="HOGENOM" id="CLU_045192_1_2_5"/>
<dbReference type="Proteomes" id="UP000001600">
    <property type="component" value="Chromosome 1"/>
</dbReference>
<dbReference type="GO" id="GO:0005737">
    <property type="term" value="C:cytoplasm"/>
    <property type="evidence" value="ECO:0007669"/>
    <property type="project" value="UniProtKB-SubCell"/>
</dbReference>
<dbReference type="GO" id="GO:0008254">
    <property type="term" value="F:3'-nucleotidase activity"/>
    <property type="evidence" value="ECO:0007669"/>
    <property type="project" value="TreeGrafter"/>
</dbReference>
<dbReference type="GO" id="GO:0008253">
    <property type="term" value="F:5'-nucleotidase activity"/>
    <property type="evidence" value="ECO:0007669"/>
    <property type="project" value="UniProtKB-UniRule"/>
</dbReference>
<dbReference type="GO" id="GO:0004309">
    <property type="term" value="F:exopolyphosphatase activity"/>
    <property type="evidence" value="ECO:0007669"/>
    <property type="project" value="TreeGrafter"/>
</dbReference>
<dbReference type="GO" id="GO:0046872">
    <property type="term" value="F:metal ion binding"/>
    <property type="evidence" value="ECO:0007669"/>
    <property type="project" value="UniProtKB-UniRule"/>
</dbReference>
<dbReference type="GO" id="GO:0000166">
    <property type="term" value="F:nucleotide binding"/>
    <property type="evidence" value="ECO:0007669"/>
    <property type="project" value="UniProtKB-KW"/>
</dbReference>
<dbReference type="FunFam" id="3.40.1210.10:FF:000001">
    <property type="entry name" value="5'/3'-nucleotidase SurE"/>
    <property type="match status" value="1"/>
</dbReference>
<dbReference type="Gene3D" id="3.40.1210.10">
    <property type="entry name" value="Survival protein SurE-like phosphatase/nucleotidase"/>
    <property type="match status" value="1"/>
</dbReference>
<dbReference type="HAMAP" id="MF_00060">
    <property type="entry name" value="SurE"/>
    <property type="match status" value="1"/>
</dbReference>
<dbReference type="InterPro" id="IPR030048">
    <property type="entry name" value="SurE"/>
</dbReference>
<dbReference type="InterPro" id="IPR002828">
    <property type="entry name" value="SurE-like_Pase/nucleotidase"/>
</dbReference>
<dbReference type="InterPro" id="IPR036523">
    <property type="entry name" value="SurE-like_sf"/>
</dbReference>
<dbReference type="NCBIfam" id="NF001490">
    <property type="entry name" value="PRK00346.1-4"/>
    <property type="match status" value="1"/>
</dbReference>
<dbReference type="NCBIfam" id="TIGR00087">
    <property type="entry name" value="surE"/>
    <property type="match status" value="1"/>
</dbReference>
<dbReference type="PANTHER" id="PTHR30457">
    <property type="entry name" value="5'-NUCLEOTIDASE SURE"/>
    <property type="match status" value="1"/>
</dbReference>
<dbReference type="PANTHER" id="PTHR30457:SF12">
    <property type="entry name" value="5'_3'-NUCLEOTIDASE SURE"/>
    <property type="match status" value="1"/>
</dbReference>
<dbReference type="Pfam" id="PF01975">
    <property type="entry name" value="SurE"/>
    <property type="match status" value="1"/>
</dbReference>
<dbReference type="SUPFAM" id="SSF64167">
    <property type="entry name" value="SurE-like"/>
    <property type="match status" value="1"/>
</dbReference>
<comment type="function">
    <text evidence="1">Nucleotidase that shows phosphatase activity on nucleoside 5'-monophosphates.</text>
</comment>
<comment type="catalytic activity">
    <reaction evidence="1">
        <text>a ribonucleoside 5'-phosphate + H2O = a ribonucleoside + phosphate</text>
        <dbReference type="Rhea" id="RHEA:12484"/>
        <dbReference type="ChEBI" id="CHEBI:15377"/>
        <dbReference type="ChEBI" id="CHEBI:18254"/>
        <dbReference type="ChEBI" id="CHEBI:43474"/>
        <dbReference type="ChEBI" id="CHEBI:58043"/>
        <dbReference type="EC" id="3.1.3.5"/>
    </reaction>
</comment>
<comment type="cofactor">
    <cofactor evidence="1">
        <name>a divalent metal cation</name>
        <dbReference type="ChEBI" id="CHEBI:60240"/>
    </cofactor>
    <text evidence="1">Binds 1 divalent metal cation per subunit.</text>
</comment>
<comment type="subcellular location">
    <subcellularLocation>
        <location evidence="1">Cytoplasm</location>
    </subcellularLocation>
</comment>
<comment type="similarity">
    <text evidence="1">Belongs to the SurE nucleotidase family.</text>
</comment>
<organism>
    <name type="scientific">Rhizobium rhizogenes (strain K84 / ATCC BAA-868)</name>
    <name type="common">Agrobacterium radiobacter</name>
    <dbReference type="NCBI Taxonomy" id="311403"/>
    <lineage>
        <taxon>Bacteria</taxon>
        <taxon>Pseudomonadati</taxon>
        <taxon>Pseudomonadota</taxon>
        <taxon>Alphaproteobacteria</taxon>
        <taxon>Hyphomicrobiales</taxon>
        <taxon>Rhizobiaceae</taxon>
        <taxon>Rhizobium/Agrobacterium group</taxon>
        <taxon>Rhizobium</taxon>
    </lineage>
</organism>
<accession>B9JEH2</accession>
<keyword id="KW-0963">Cytoplasm</keyword>
<keyword id="KW-0378">Hydrolase</keyword>
<keyword id="KW-0479">Metal-binding</keyword>
<keyword id="KW-0547">Nucleotide-binding</keyword>
<sequence length="257" mass="28003">MRILLTNDDGIHAEGLAALERIARTMSDDVWIVAPETDQSGLAHSLSLSEPLRLRKVSDKHYALRGTPTDCVIMGIRQVMDIKPDLILSGVNSGSNVADDVTYSGTIAGAIEGTLQGVRSFALSQAYVHENGTRVVPWEVVQAHAPALLGKLIDIDLPDGTFLNLNFPNCRPDEVSGTEVTAQGNLAFNLQVDERADGRGFPYYWLRFGERSGIFRPGTDIHALKQNRISVTPLKLDLTDYSVQDRVARALGHGVAD</sequence>
<gene>
    <name evidence="1" type="primary">surE</name>
    <name type="ordered locus">Arad_2132</name>
</gene>
<protein>
    <recommendedName>
        <fullName evidence="1">5'-nucleotidase SurE</fullName>
        <ecNumber evidence="1">3.1.3.5</ecNumber>
    </recommendedName>
    <alternativeName>
        <fullName evidence="1">Nucleoside 5'-monophosphate phosphohydrolase</fullName>
    </alternativeName>
</protein>